<comment type="function">
    <text evidence="1">Catalyzes the reversible transfer of the terminal phosphate group between ATP and AMP. Plays an important role in cellular energy homeostasis and in adenine nucleotide metabolism.</text>
</comment>
<comment type="catalytic activity">
    <reaction evidence="1">
        <text>AMP + ATP = 2 ADP</text>
        <dbReference type="Rhea" id="RHEA:12973"/>
        <dbReference type="ChEBI" id="CHEBI:30616"/>
        <dbReference type="ChEBI" id="CHEBI:456215"/>
        <dbReference type="ChEBI" id="CHEBI:456216"/>
        <dbReference type="EC" id="2.7.4.3"/>
    </reaction>
</comment>
<comment type="pathway">
    <text evidence="1">Purine metabolism; AMP biosynthesis via salvage pathway; AMP from ADP: step 1/1.</text>
</comment>
<comment type="subunit">
    <text evidence="1">Monomer.</text>
</comment>
<comment type="subcellular location">
    <subcellularLocation>
        <location evidence="1">Cytoplasm</location>
    </subcellularLocation>
</comment>
<comment type="domain">
    <text evidence="1">Consists of three domains, a large central CORE domain and two small peripheral domains, NMPbind and LID, which undergo movements during catalysis. The LID domain closes over the site of phosphoryl transfer upon ATP binding. Assembling and dissambling the active center during each catalytic cycle provides an effective means to prevent ATP hydrolysis.</text>
</comment>
<comment type="similarity">
    <text evidence="1">Belongs to the adenylate kinase family.</text>
</comment>
<keyword id="KW-0067">ATP-binding</keyword>
<keyword id="KW-0963">Cytoplasm</keyword>
<keyword id="KW-0418">Kinase</keyword>
<keyword id="KW-0545">Nucleotide biosynthesis</keyword>
<keyword id="KW-0547">Nucleotide-binding</keyword>
<keyword id="KW-0808">Transferase</keyword>
<evidence type="ECO:0000255" key="1">
    <source>
        <dbReference type="HAMAP-Rule" id="MF_00235"/>
    </source>
</evidence>
<protein>
    <recommendedName>
        <fullName evidence="1">Adenylate kinase</fullName>
        <shortName evidence="1">AK</shortName>
        <ecNumber evidence="1">2.7.4.3</ecNumber>
    </recommendedName>
    <alternativeName>
        <fullName evidence="1">ATP-AMP transphosphorylase</fullName>
    </alternativeName>
    <alternativeName>
        <fullName evidence="1">ATP:AMP phosphotransferase</fullName>
    </alternativeName>
    <alternativeName>
        <fullName evidence="1">Adenylate monophosphate kinase</fullName>
    </alternativeName>
</protein>
<dbReference type="EC" id="2.7.4.3" evidence="1"/>
<dbReference type="EMBL" id="CP000259">
    <property type="protein sequence ID" value="ABF31253.1"/>
    <property type="molecule type" value="Genomic_DNA"/>
</dbReference>
<dbReference type="RefSeq" id="WP_002987754.1">
    <property type="nucleotide sequence ID" value="NC_008021.1"/>
</dbReference>
<dbReference type="SMR" id="Q1JNZ6"/>
<dbReference type="KEGG" id="spk:MGAS9429_Spy0065"/>
<dbReference type="HOGENOM" id="CLU_032354_1_2_9"/>
<dbReference type="UniPathway" id="UPA00588">
    <property type="reaction ID" value="UER00649"/>
</dbReference>
<dbReference type="Proteomes" id="UP000002433">
    <property type="component" value="Chromosome"/>
</dbReference>
<dbReference type="GO" id="GO:0005737">
    <property type="term" value="C:cytoplasm"/>
    <property type="evidence" value="ECO:0007669"/>
    <property type="project" value="UniProtKB-SubCell"/>
</dbReference>
<dbReference type="GO" id="GO:0004017">
    <property type="term" value="F:adenylate kinase activity"/>
    <property type="evidence" value="ECO:0007669"/>
    <property type="project" value="UniProtKB-UniRule"/>
</dbReference>
<dbReference type="GO" id="GO:0005524">
    <property type="term" value="F:ATP binding"/>
    <property type="evidence" value="ECO:0007669"/>
    <property type="project" value="UniProtKB-UniRule"/>
</dbReference>
<dbReference type="GO" id="GO:0044209">
    <property type="term" value="P:AMP salvage"/>
    <property type="evidence" value="ECO:0007669"/>
    <property type="project" value="UniProtKB-UniRule"/>
</dbReference>
<dbReference type="CDD" id="cd01428">
    <property type="entry name" value="ADK"/>
    <property type="match status" value="1"/>
</dbReference>
<dbReference type="FunFam" id="3.40.50.300:FF:000106">
    <property type="entry name" value="Adenylate kinase mitochondrial"/>
    <property type="match status" value="1"/>
</dbReference>
<dbReference type="Gene3D" id="3.40.50.300">
    <property type="entry name" value="P-loop containing nucleotide triphosphate hydrolases"/>
    <property type="match status" value="1"/>
</dbReference>
<dbReference type="HAMAP" id="MF_00235">
    <property type="entry name" value="Adenylate_kinase_Adk"/>
    <property type="match status" value="1"/>
</dbReference>
<dbReference type="InterPro" id="IPR006259">
    <property type="entry name" value="Adenyl_kin_sub"/>
</dbReference>
<dbReference type="InterPro" id="IPR000850">
    <property type="entry name" value="Adenylat/UMP-CMP_kin"/>
</dbReference>
<dbReference type="InterPro" id="IPR033690">
    <property type="entry name" value="Adenylat_kinase_CS"/>
</dbReference>
<dbReference type="InterPro" id="IPR027417">
    <property type="entry name" value="P-loop_NTPase"/>
</dbReference>
<dbReference type="NCBIfam" id="TIGR01351">
    <property type="entry name" value="adk"/>
    <property type="match status" value="1"/>
</dbReference>
<dbReference type="NCBIfam" id="NF001380">
    <property type="entry name" value="PRK00279.1-2"/>
    <property type="match status" value="1"/>
</dbReference>
<dbReference type="NCBIfam" id="NF001381">
    <property type="entry name" value="PRK00279.1-3"/>
    <property type="match status" value="1"/>
</dbReference>
<dbReference type="NCBIfam" id="NF001382">
    <property type="entry name" value="PRK00279.1-4"/>
    <property type="match status" value="1"/>
</dbReference>
<dbReference type="NCBIfam" id="NF011100">
    <property type="entry name" value="PRK14527.1"/>
    <property type="match status" value="1"/>
</dbReference>
<dbReference type="PANTHER" id="PTHR23359">
    <property type="entry name" value="NUCLEOTIDE KINASE"/>
    <property type="match status" value="1"/>
</dbReference>
<dbReference type="Pfam" id="PF00406">
    <property type="entry name" value="ADK"/>
    <property type="match status" value="1"/>
</dbReference>
<dbReference type="PRINTS" id="PR00094">
    <property type="entry name" value="ADENYLTKNASE"/>
</dbReference>
<dbReference type="SUPFAM" id="SSF52540">
    <property type="entry name" value="P-loop containing nucleoside triphosphate hydrolases"/>
    <property type="match status" value="1"/>
</dbReference>
<dbReference type="PROSITE" id="PS00113">
    <property type="entry name" value="ADENYLATE_KINASE"/>
    <property type="match status" value="1"/>
</dbReference>
<accession>Q1JNZ6</accession>
<proteinExistence type="inferred from homology"/>
<reference key="1">
    <citation type="journal article" date="2006" name="Proc. Natl. Acad. Sci. U.S.A.">
        <title>Molecular genetic anatomy of inter- and intraserotype variation in the human bacterial pathogen group A Streptococcus.</title>
        <authorList>
            <person name="Beres S.B."/>
            <person name="Richter E.W."/>
            <person name="Nagiec M.J."/>
            <person name="Sumby P."/>
            <person name="Porcella S.F."/>
            <person name="DeLeo F.R."/>
            <person name="Musser J.M."/>
        </authorList>
    </citation>
    <scope>NUCLEOTIDE SEQUENCE [LARGE SCALE GENOMIC DNA]</scope>
    <source>
        <strain>MGAS9429</strain>
    </source>
</reference>
<name>KAD_STRPC</name>
<organism>
    <name type="scientific">Streptococcus pyogenes serotype M12 (strain MGAS9429)</name>
    <dbReference type="NCBI Taxonomy" id="370551"/>
    <lineage>
        <taxon>Bacteria</taxon>
        <taxon>Bacillati</taxon>
        <taxon>Bacillota</taxon>
        <taxon>Bacilli</taxon>
        <taxon>Lactobacillales</taxon>
        <taxon>Streptococcaceae</taxon>
        <taxon>Streptococcus</taxon>
    </lineage>
</organism>
<feature type="chain" id="PRO_1000058914" description="Adenylate kinase">
    <location>
        <begin position="1"/>
        <end position="212"/>
    </location>
</feature>
<feature type="region of interest" description="NMP" evidence="1">
    <location>
        <begin position="30"/>
        <end position="59"/>
    </location>
</feature>
<feature type="region of interest" description="LID" evidence="1">
    <location>
        <begin position="127"/>
        <end position="159"/>
    </location>
</feature>
<feature type="binding site" evidence="1">
    <location>
        <begin position="10"/>
        <end position="15"/>
    </location>
    <ligand>
        <name>ATP</name>
        <dbReference type="ChEBI" id="CHEBI:30616"/>
    </ligand>
</feature>
<feature type="binding site" evidence="1">
    <location>
        <position position="31"/>
    </location>
    <ligand>
        <name>AMP</name>
        <dbReference type="ChEBI" id="CHEBI:456215"/>
    </ligand>
</feature>
<feature type="binding site" evidence="1">
    <location>
        <position position="36"/>
    </location>
    <ligand>
        <name>AMP</name>
        <dbReference type="ChEBI" id="CHEBI:456215"/>
    </ligand>
</feature>
<feature type="binding site" evidence="1">
    <location>
        <begin position="57"/>
        <end position="59"/>
    </location>
    <ligand>
        <name>AMP</name>
        <dbReference type="ChEBI" id="CHEBI:456215"/>
    </ligand>
</feature>
<feature type="binding site" evidence="1">
    <location>
        <begin position="86"/>
        <end position="89"/>
    </location>
    <ligand>
        <name>AMP</name>
        <dbReference type="ChEBI" id="CHEBI:456215"/>
    </ligand>
</feature>
<feature type="binding site" evidence="1">
    <location>
        <position position="93"/>
    </location>
    <ligand>
        <name>AMP</name>
        <dbReference type="ChEBI" id="CHEBI:456215"/>
    </ligand>
</feature>
<feature type="binding site" evidence="1">
    <location>
        <position position="128"/>
    </location>
    <ligand>
        <name>ATP</name>
        <dbReference type="ChEBI" id="CHEBI:30616"/>
    </ligand>
</feature>
<feature type="binding site" evidence="1">
    <location>
        <begin position="137"/>
        <end position="138"/>
    </location>
    <ligand>
        <name>ATP</name>
        <dbReference type="ChEBI" id="CHEBI:30616"/>
    </ligand>
</feature>
<feature type="binding site" evidence="1">
    <location>
        <position position="156"/>
    </location>
    <ligand>
        <name>AMP</name>
        <dbReference type="ChEBI" id="CHEBI:456215"/>
    </ligand>
</feature>
<feature type="binding site" evidence="1">
    <location>
        <position position="167"/>
    </location>
    <ligand>
        <name>AMP</name>
        <dbReference type="ChEBI" id="CHEBI:456215"/>
    </ligand>
</feature>
<feature type="binding site" evidence="1">
    <location>
        <position position="195"/>
    </location>
    <ligand>
        <name>ATP</name>
        <dbReference type="ChEBI" id="CHEBI:30616"/>
    </ligand>
</feature>
<sequence>MNLLIIGLPGAGKGTQAAKIVEEFGVAHISTGDMFRAAMANQTEMGRLAKSYIDKGELVPDEVTNGIVKERLAEDDIAEKGFLLDGYPRTIEQAHALDATLEELGLRLDGVINIKVDPSCLVERLSGRIINRKTGETFHKVFNPPVDYKEEDYYQREDDKPETVKRRLDVNMAQGEPILEHYRKLGLVTDIEGNQEITDVFADVEKALLELK</sequence>
<gene>
    <name evidence="1" type="primary">adk</name>
    <name type="ordered locus">MGAS9429_Spy0065</name>
</gene>